<accession>Q5L8B8</accession>
<reference key="1">
    <citation type="journal article" date="2005" name="Science">
        <title>Extensive DNA inversions in the B. fragilis genome control variable gene expression.</title>
        <authorList>
            <person name="Cerdeno-Tarraga A.-M."/>
            <person name="Patrick S."/>
            <person name="Crossman L.C."/>
            <person name="Blakely G."/>
            <person name="Abratt V."/>
            <person name="Lennard N."/>
            <person name="Poxton I."/>
            <person name="Duerden B."/>
            <person name="Harris B."/>
            <person name="Quail M.A."/>
            <person name="Barron A."/>
            <person name="Clark L."/>
            <person name="Corton C."/>
            <person name="Doggett J."/>
            <person name="Holden M.T.G."/>
            <person name="Larke N."/>
            <person name="Line A."/>
            <person name="Lord A."/>
            <person name="Norbertczak H."/>
            <person name="Ormond D."/>
            <person name="Price C."/>
            <person name="Rabbinowitsch E."/>
            <person name="Woodward J."/>
            <person name="Barrell B.G."/>
            <person name="Parkhill J."/>
        </authorList>
    </citation>
    <scope>NUCLEOTIDE SEQUENCE [LARGE SCALE GENOMIC DNA]</scope>
    <source>
        <strain>ATCC 25285 / DSM 2151 / CCUG 4856 / JCM 11019 / LMG 10263 / NCTC 9343 / Onslow / VPI 2553 / EN-2</strain>
    </source>
</reference>
<comment type="function">
    <text evidence="1">One of the primary rRNA binding proteins, it binds specifically to the 5'-end of 16S ribosomal RNA.</text>
</comment>
<comment type="subunit">
    <text evidence="1">Part of the 30S ribosomal subunit.</text>
</comment>
<comment type="similarity">
    <text evidence="1">Belongs to the universal ribosomal protein uS17 family.</text>
</comment>
<proteinExistence type="inferred from homology"/>
<dbReference type="EMBL" id="CR626927">
    <property type="protein sequence ID" value="CAH09670.1"/>
    <property type="molecule type" value="Genomic_DNA"/>
</dbReference>
<dbReference type="RefSeq" id="WP_008770213.1">
    <property type="nucleotide sequence ID" value="NZ_UFTH01000001.1"/>
</dbReference>
<dbReference type="SMR" id="Q5L8B8"/>
<dbReference type="PaxDb" id="272559-BF9343_3889"/>
<dbReference type="GeneID" id="60367435"/>
<dbReference type="KEGG" id="bfs:BF9343_3889"/>
<dbReference type="eggNOG" id="COG0186">
    <property type="taxonomic scope" value="Bacteria"/>
</dbReference>
<dbReference type="HOGENOM" id="CLU_073626_1_1_10"/>
<dbReference type="Proteomes" id="UP000006731">
    <property type="component" value="Chromosome"/>
</dbReference>
<dbReference type="GO" id="GO:0022627">
    <property type="term" value="C:cytosolic small ribosomal subunit"/>
    <property type="evidence" value="ECO:0007669"/>
    <property type="project" value="TreeGrafter"/>
</dbReference>
<dbReference type="GO" id="GO:0019843">
    <property type="term" value="F:rRNA binding"/>
    <property type="evidence" value="ECO:0007669"/>
    <property type="project" value="UniProtKB-UniRule"/>
</dbReference>
<dbReference type="GO" id="GO:0003735">
    <property type="term" value="F:structural constituent of ribosome"/>
    <property type="evidence" value="ECO:0007669"/>
    <property type="project" value="InterPro"/>
</dbReference>
<dbReference type="GO" id="GO:0006412">
    <property type="term" value="P:translation"/>
    <property type="evidence" value="ECO:0007669"/>
    <property type="project" value="UniProtKB-UniRule"/>
</dbReference>
<dbReference type="CDD" id="cd00364">
    <property type="entry name" value="Ribosomal_uS17"/>
    <property type="match status" value="1"/>
</dbReference>
<dbReference type="FunFam" id="2.40.50.140:FF:000123">
    <property type="entry name" value="30S ribosomal protein S17"/>
    <property type="match status" value="1"/>
</dbReference>
<dbReference type="Gene3D" id="2.40.50.140">
    <property type="entry name" value="Nucleic acid-binding proteins"/>
    <property type="match status" value="1"/>
</dbReference>
<dbReference type="HAMAP" id="MF_01345_B">
    <property type="entry name" value="Ribosomal_uS17_B"/>
    <property type="match status" value="1"/>
</dbReference>
<dbReference type="InterPro" id="IPR012340">
    <property type="entry name" value="NA-bd_OB-fold"/>
</dbReference>
<dbReference type="InterPro" id="IPR000266">
    <property type="entry name" value="Ribosomal_uS17"/>
</dbReference>
<dbReference type="InterPro" id="IPR019984">
    <property type="entry name" value="Ribosomal_uS17_bact/chlr"/>
</dbReference>
<dbReference type="InterPro" id="IPR019979">
    <property type="entry name" value="Ribosomal_uS17_CS"/>
</dbReference>
<dbReference type="NCBIfam" id="NF004123">
    <property type="entry name" value="PRK05610.1"/>
    <property type="match status" value="1"/>
</dbReference>
<dbReference type="NCBIfam" id="TIGR03635">
    <property type="entry name" value="uS17_bact"/>
    <property type="match status" value="1"/>
</dbReference>
<dbReference type="PANTHER" id="PTHR10744">
    <property type="entry name" value="40S RIBOSOMAL PROTEIN S11 FAMILY MEMBER"/>
    <property type="match status" value="1"/>
</dbReference>
<dbReference type="PANTHER" id="PTHR10744:SF1">
    <property type="entry name" value="SMALL RIBOSOMAL SUBUNIT PROTEIN US17M"/>
    <property type="match status" value="1"/>
</dbReference>
<dbReference type="Pfam" id="PF00366">
    <property type="entry name" value="Ribosomal_S17"/>
    <property type="match status" value="1"/>
</dbReference>
<dbReference type="PRINTS" id="PR00973">
    <property type="entry name" value="RIBOSOMALS17"/>
</dbReference>
<dbReference type="SUPFAM" id="SSF50249">
    <property type="entry name" value="Nucleic acid-binding proteins"/>
    <property type="match status" value="1"/>
</dbReference>
<dbReference type="PROSITE" id="PS00056">
    <property type="entry name" value="RIBOSOMAL_S17"/>
    <property type="match status" value="1"/>
</dbReference>
<sequence length="89" mass="10472">MISLMEARNLRKERTGVVLSNKMEKTITVAAKFKEKHPIYGKFVSKTKKYHAHDEKNECNVGDTVRIMETRPLSKTKRWRLVEIIERAK</sequence>
<protein>
    <recommendedName>
        <fullName evidence="1">Small ribosomal subunit protein uS17</fullName>
    </recommendedName>
    <alternativeName>
        <fullName evidence="2">30S ribosomal protein S17</fullName>
    </alternativeName>
</protein>
<gene>
    <name evidence="1" type="primary">rpsQ</name>
    <name type="ordered locus">BF3994</name>
</gene>
<name>RS17_BACFN</name>
<keyword id="KW-0687">Ribonucleoprotein</keyword>
<keyword id="KW-0689">Ribosomal protein</keyword>
<keyword id="KW-0694">RNA-binding</keyword>
<keyword id="KW-0699">rRNA-binding</keyword>
<evidence type="ECO:0000255" key="1">
    <source>
        <dbReference type="HAMAP-Rule" id="MF_01345"/>
    </source>
</evidence>
<evidence type="ECO:0000305" key="2"/>
<feature type="chain" id="PRO_0000233426" description="Small ribosomal subunit protein uS17">
    <location>
        <begin position="1"/>
        <end position="89"/>
    </location>
</feature>
<organism>
    <name type="scientific">Bacteroides fragilis (strain ATCC 25285 / DSM 2151 / CCUG 4856 / JCM 11019 / LMG 10263 / NCTC 9343 / Onslow / VPI 2553 / EN-2)</name>
    <dbReference type="NCBI Taxonomy" id="272559"/>
    <lineage>
        <taxon>Bacteria</taxon>
        <taxon>Pseudomonadati</taxon>
        <taxon>Bacteroidota</taxon>
        <taxon>Bacteroidia</taxon>
        <taxon>Bacteroidales</taxon>
        <taxon>Bacteroidaceae</taxon>
        <taxon>Bacteroides</taxon>
    </lineage>
</organism>